<proteinExistence type="inferred from homology"/>
<sequence length="222" mass="24591">MLANSREELVEVFDALDAELDRLDEVSFEVLTTPERLRSLERLECLVRRLPAVGHTLINQLDTQASEEELGGTLCCALANRLRITKPDAALRIADAADLGPRRALTGEPLAPQLTATATAQRQGLIGEAHIKVIRALFRPPARRGGCVHPPGRRSRPGRQSRSISSRRAGPLRPAGHGLATPRRRPHRHRTRPQTRHHPEQPAIRRHVTAKWLPDPPSAGHL</sequence>
<name>Y1588_MYCTO</name>
<comment type="similarity">
    <text evidence="2">Belongs to the Rv1128c/1148c/1588c/1702c/1945/3466 family.</text>
</comment>
<protein>
    <recommendedName>
        <fullName>Uncharacterized protein MT1623</fullName>
    </recommendedName>
</protein>
<feature type="chain" id="PRO_0000427421" description="Uncharacterized protein MT1623">
    <location>
        <begin position="1"/>
        <end position="222"/>
    </location>
</feature>
<feature type="region of interest" description="Disordered" evidence="1">
    <location>
        <begin position="142"/>
        <end position="222"/>
    </location>
</feature>
<feature type="compositionally biased region" description="Low complexity" evidence="1">
    <location>
        <begin position="160"/>
        <end position="169"/>
    </location>
</feature>
<feature type="compositionally biased region" description="Basic residues" evidence="1">
    <location>
        <begin position="182"/>
        <end position="196"/>
    </location>
</feature>
<evidence type="ECO:0000256" key="1">
    <source>
        <dbReference type="SAM" id="MobiDB-lite"/>
    </source>
</evidence>
<evidence type="ECO:0000305" key="2"/>
<reference key="1">
    <citation type="journal article" date="2002" name="J. Bacteriol.">
        <title>Whole-genome comparison of Mycobacterium tuberculosis clinical and laboratory strains.</title>
        <authorList>
            <person name="Fleischmann R.D."/>
            <person name="Alland D."/>
            <person name="Eisen J.A."/>
            <person name="Carpenter L."/>
            <person name="White O."/>
            <person name="Peterson J.D."/>
            <person name="DeBoy R.T."/>
            <person name="Dodson R.J."/>
            <person name="Gwinn M.L."/>
            <person name="Haft D.H."/>
            <person name="Hickey E.K."/>
            <person name="Kolonay J.F."/>
            <person name="Nelson W.C."/>
            <person name="Umayam L.A."/>
            <person name="Ermolaeva M.D."/>
            <person name="Salzberg S.L."/>
            <person name="Delcher A."/>
            <person name="Utterback T.R."/>
            <person name="Weidman J.F."/>
            <person name="Khouri H.M."/>
            <person name="Gill J."/>
            <person name="Mikula A."/>
            <person name="Bishai W."/>
            <person name="Jacobs W.R. Jr."/>
            <person name="Venter J.C."/>
            <person name="Fraser C.M."/>
        </authorList>
    </citation>
    <scope>NUCLEOTIDE SEQUENCE [LARGE SCALE GENOMIC DNA]</scope>
    <source>
        <strain>CDC 1551 / Oshkosh</strain>
    </source>
</reference>
<accession>P9WLT8</accession>
<accession>L0T7A1</accession>
<accession>O06602</accession>
<accession>O52589</accession>
<accession>P0A5F1</accession>
<dbReference type="EMBL" id="AE000516">
    <property type="protein sequence ID" value="AAK45891.1"/>
    <property type="molecule type" value="Genomic_DNA"/>
</dbReference>
<dbReference type="PIR" id="F70542">
    <property type="entry name" value="F70542"/>
</dbReference>
<dbReference type="KEGG" id="mtc:MT1623"/>
<dbReference type="HOGENOM" id="CLU_099011_1_1_11"/>
<dbReference type="Proteomes" id="UP000001020">
    <property type="component" value="Chromosome"/>
</dbReference>
<dbReference type="InterPro" id="IPR003870">
    <property type="entry name" value="DUF222"/>
</dbReference>
<dbReference type="Pfam" id="PF02720">
    <property type="entry name" value="DUF222"/>
    <property type="match status" value="1"/>
</dbReference>
<organism>
    <name type="scientific">Mycobacterium tuberculosis (strain CDC 1551 / Oshkosh)</name>
    <dbReference type="NCBI Taxonomy" id="83331"/>
    <lineage>
        <taxon>Bacteria</taxon>
        <taxon>Bacillati</taxon>
        <taxon>Actinomycetota</taxon>
        <taxon>Actinomycetes</taxon>
        <taxon>Mycobacteriales</taxon>
        <taxon>Mycobacteriaceae</taxon>
        <taxon>Mycobacterium</taxon>
        <taxon>Mycobacterium tuberculosis complex</taxon>
    </lineage>
</organism>
<gene>
    <name type="ordered locus">MT1623</name>
</gene>
<keyword id="KW-1185">Reference proteome</keyword>